<keyword id="KW-0004">4Fe-4S</keyword>
<keyword id="KW-0408">Iron</keyword>
<keyword id="KW-0411">Iron-sulfur</keyword>
<keyword id="KW-0456">Lyase</keyword>
<keyword id="KW-0479">Metal-binding</keyword>
<keyword id="KW-1185">Reference proteome</keyword>
<keyword id="KW-0949">S-adenosyl-L-methionine</keyword>
<keyword id="KW-0784">Thiamine biosynthesis</keyword>
<keyword id="KW-0862">Zinc</keyword>
<evidence type="ECO:0000255" key="1">
    <source>
        <dbReference type="HAMAP-Rule" id="MF_00089"/>
    </source>
</evidence>
<evidence type="ECO:0000256" key="2">
    <source>
        <dbReference type="SAM" id="MobiDB-lite"/>
    </source>
</evidence>
<feature type="chain" id="PRO_0000242268" description="Phosphomethylpyrimidine synthase">
    <location>
        <begin position="1"/>
        <end position="638"/>
    </location>
</feature>
<feature type="region of interest" description="Disordered" evidence="2">
    <location>
        <begin position="608"/>
        <end position="633"/>
    </location>
</feature>
<feature type="compositionally biased region" description="Low complexity" evidence="2">
    <location>
        <begin position="608"/>
        <end position="624"/>
    </location>
</feature>
<feature type="binding site" evidence="1">
    <location>
        <position position="236"/>
    </location>
    <ligand>
        <name>substrate</name>
    </ligand>
</feature>
<feature type="binding site" evidence="1">
    <location>
        <position position="265"/>
    </location>
    <ligand>
        <name>substrate</name>
    </ligand>
</feature>
<feature type="binding site" evidence="1">
    <location>
        <position position="294"/>
    </location>
    <ligand>
        <name>substrate</name>
    </ligand>
</feature>
<feature type="binding site" evidence="1">
    <location>
        <position position="330"/>
    </location>
    <ligand>
        <name>substrate</name>
    </ligand>
</feature>
<feature type="binding site" evidence="1">
    <location>
        <begin position="350"/>
        <end position="352"/>
    </location>
    <ligand>
        <name>substrate</name>
    </ligand>
</feature>
<feature type="binding site" evidence="1">
    <location>
        <begin position="391"/>
        <end position="394"/>
    </location>
    <ligand>
        <name>substrate</name>
    </ligand>
</feature>
<feature type="binding site" evidence="1">
    <location>
        <position position="430"/>
    </location>
    <ligand>
        <name>substrate</name>
    </ligand>
</feature>
<feature type="binding site" evidence="1">
    <location>
        <position position="434"/>
    </location>
    <ligand>
        <name>Zn(2+)</name>
        <dbReference type="ChEBI" id="CHEBI:29105"/>
    </ligand>
</feature>
<feature type="binding site" evidence="1">
    <location>
        <position position="457"/>
    </location>
    <ligand>
        <name>substrate</name>
    </ligand>
</feature>
<feature type="binding site" evidence="1">
    <location>
        <position position="498"/>
    </location>
    <ligand>
        <name>Zn(2+)</name>
        <dbReference type="ChEBI" id="CHEBI:29105"/>
    </ligand>
</feature>
<feature type="binding site" evidence="1">
    <location>
        <position position="578"/>
    </location>
    <ligand>
        <name>[4Fe-4S] cluster</name>
        <dbReference type="ChEBI" id="CHEBI:49883"/>
        <note>4Fe-4S-S-AdoMet</note>
    </ligand>
</feature>
<feature type="binding site" evidence="1">
    <location>
        <position position="581"/>
    </location>
    <ligand>
        <name>[4Fe-4S] cluster</name>
        <dbReference type="ChEBI" id="CHEBI:49883"/>
        <note>4Fe-4S-S-AdoMet</note>
    </ligand>
</feature>
<feature type="binding site" evidence="1">
    <location>
        <position position="586"/>
    </location>
    <ligand>
        <name>[4Fe-4S] cluster</name>
        <dbReference type="ChEBI" id="CHEBI:49883"/>
        <note>4Fe-4S-S-AdoMet</note>
    </ligand>
</feature>
<proteinExistence type="inferred from homology"/>
<sequence length="638" mass="71366">MGGTIDINKISKLSESAQVDALSTQPFPASKKIYAEGSRPDIRVAMREITLTPTPLQDGATEENAPLRVYDTSGPYTDPAVEIDVRRGLPRMREAWINDRADTEHLTGATSFYAKSREQNLSLDNLRFEHRHAPRKALAGGNVSQLHYARKGIITPEMEYIAIRENLALEQAEIENAMRSQHPGMNFGANTPRYITPEFVRQEVAAGRAVIPCNINHPEAEPMIIGRNFHVKVNANIGNSAVTSSIEEEVEKLVWATRWGADTVMDLSTGKNIHETREWIIRNSPVPIGTVPIYQALEKVDGVAEDLNWEVFRDTLIEQAEQGVDYFTIHAGVLLRYVPMTAKRLTGIVSRGGSIMAKWCLAHHQENFLYTHFEEICEIMKAYDVSFSLGDGLRPGCIADANDEAQFSELRTLGELTEIAWKHDVQTIIEGPGHVPMHMIKENMEEQLKHCKEAPFYTLGPLITDISPGYDHFSSGIGAAMIGWYGCAMLCYVTPKEHLGLPNKDDVKQGLIAYKIAAHAADLAKGHPGAQLRDNAMSKARFEFRWEDQFNIALDPDTARAYHDETLPKEGHKLAHFCSMCGPKFCSMKITQDVRDYSAKLEAEKAQAEGASQQEAEQGMQEMSQKYKDAGRRLYHEV</sequence>
<organism>
    <name type="scientific">Hahella chejuensis (strain KCTC 2396)</name>
    <dbReference type="NCBI Taxonomy" id="349521"/>
    <lineage>
        <taxon>Bacteria</taxon>
        <taxon>Pseudomonadati</taxon>
        <taxon>Pseudomonadota</taxon>
        <taxon>Gammaproteobacteria</taxon>
        <taxon>Oceanospirillales</taxon>
        <taxon>Hahellaceae</taxon>
        <taxon>Hahella</taxon>
    </lineage>
</organism>
<name>THIC_HAHCH</name>
<gene>
    <name evidence="1" type="primary">thiC</name>
    <name type="ordered locus">HCH_00137</name>
</gene>
<protein>
    <recommendedName>
        <fullName evidence="1">Phosphomethylpyrimidine synthase</fullName>
        <ecNumber evidence="1">4.1.99.17</ecNumber>
    </recommendedName>
    <alternativeName>
        <fullName evidence="1">Hydroxymethylpyrimidine phosphate synthase</fullName>
        <shortName evidence="1">HMP-P synthase</shortName>
        <shortName evidence="1">HMP-phosphate synthase</shortName>
        <shortName evidence="1">HMPP synthase</shortName>
    </alternativeName>
    <alternativeName>
        <fullName evidence="1">Thiamine biosynthesis protein ThiC</fullName>
    </alternativeName>
</protein>
<comment type="function">
    <text evidence="1">Catalyzes the synthesis of the hydroxymethylpyrimidine phosphate (HMP-P) moiety of thiamine from aminoimidazole ribotide (AIR) in a radical S-adenosyl-L-methionine (SAM)-dependent reaction.</text>
</comment>
<comment type="catalytic activity">
    <reaction evidence="1">
        <text>5-amino-1-(5-phospho-beta-D-ribosyl)imidazole + S-adenosyl-L-methionine = 4-amino-2-methyl-5-(phosphooxymethyl)pyrimidine + CO + 5'-deoxyadenosine + formate + L-methionine + 3 H(+)</text>
        <dbReference type="Rhea" id="RHEA:24840"/>
        <dbReference type="ChEBI" id="CHEBI:15378"/>
        <dbReference type="ChEBI" id="CHEBI:15740"/>
        <dbReference type="ChEBI" id="CHEBI:17245"/>
        <dbReference type="ChEBI" id="CHEBI:17319"/>
        <dbReference type="ChEBI" id="CHEBI:57844"/>
        <dbReference type="ChEBI" id="CHEBI:58354"/>
        <dbReference type="ChEBI" id="CHEBI:59789"/>
        <dbReference type="ChEBI" id="CHEBI:137981"/>
        <dbReference type="EC" id="4.1.99.17"/>
    </reaction>
</comment>
<comment type="cofactor">
    <cofactor evidence="1">
        <name>[4Fe-4S] cluster</name>
        <dbReference type="ChEBI" id="CHEBI:49883"/>
    </cofactor>
    <text evidence="1">Binds 1 [4Fe-4S] cluster per subunit. The cluster is coordinated with 3 cysteines and an exchangeable S-adenosyl-L-methionine.</text>
</comment>
<comment type="pathway">
    <text evidence="1">Cofactor biosynthesis; thiamine diphosphate biosynthesis.</text>
</comment>
<comment type="subunit">
    <text evidence="1">Homodimer.</text>
</comment>
<comment type="similarity">
    <text evidence="1">Belongs to the ThiC family.</text>
</comment>
<accession>Q2SQL8</accession>
<dbReference type="EC" id="4.1.99.17" evidence="1"/>
<dbReference type="EMBL" id="CP000155">
    <property type="protein sequence ID" value="ABC27056.1"/>
    <property type="molecule type" value="Genomic_DNA"/>
</dbReference>
<dbReference type="RefSeq" id="WP_011394133.1">
    <property type="nucleotide sequence ID" value="NC_007645.1"/>
</dbReference>
<dbReference type="SMR" id="Q2SQL8"/>
<dbReference type="STRING" id="349521.HCH_00137"/>
<dbReference type="KEGG" id="hch:HCH_00137"/>
<dbReference type="eggNOG" id="COG0422">
    <property type="taxonomic scope" value="Bacteria"/>
</dbReference>
<dbReference type="HOGENOM" id="CLU_013181_2_1_6"/>
<dbReference type="UniPathway" id="UPA00060"/>
<dbReference type="Proteomes" id="UP000000238">
    <property type="component" value="Chromosome"/>
</dbReference>
<dbReference type="GO" id="GO:0005829">
    <property type="term" value="C:cytosol"/>
    <property type="evidence" value="ECO:0007669"/>
    <property type="project" value="TreeGrafter"/>
</dbReference>
<dbReference type="GO" id="GO:0051539">
    <property type="term" value="F:4 iron, 4 sulfur cluster binding"/>
    <property type="evidence" value="ECO:0007669"/>
    <property type="project" value="UniProtKB-KW"/>
</dbReference>
<dbReference type="GO" id="GO:0016830">
    <property type="term" value="F:carbon-carbon lyase activity"/>
    <property type="evidence" value="ECO:0007669"/>
    <property type="project" value="InterPro"/>
</dbReference>
<dbReference type="GO" id="GO:0008270">
    <property type="term" value="F:zinc ion binding"/>
    <property type="evidence" value="ECO:0007669"/>
    <property type="project" value="UniProtKB-UniRule"/>
</dbReference>
<dbReference type="GO" id="GO:0009228">
    <property type="term" value="P:thiamine biosynthetic process"/>
    <property type="evidence" value="ECO:0007669"/>
    <property type="project" value="UniProtKB-KW"/>
</dbReference>
<dbReference type="GO" id="GO:0009229">
    <property type="term" value="P:thiamine diphosphate biosynthetic process"/>
    <property type="evidence" value="ECO:0007669"/>
    <property type="project" value="UniProtKB-UniRule"/>
</dbReference>
<dbReference type="FunFam" id="3.20.20.540:FF:000001">
    <property type="entry name" value="Phosphomethylpyrimidine synthase"/>
    <property type="match status" value="1"/>
</dbReference>
<dbReference type="Gene3D" id="6.10.250.620">
    <property type="match status" value="1"/>
</dbReference>
<dbReference type="Gene3D" id="3.20.20.540">
    <property type="entry name" value="Radical SAM ThiC family, central domain"/>
    <property type="match status" value="1"/>
</dbReference>
<dbReference type="HAMAP" id="MF_00089">
    <property type="entry name" value="ThiC"/>
    <property type="match status" value="1"/>
</dbReference>
<dbReference type="InterPro" id="IPR037509">
    <property type="entry name" value="ThiC"/>
</dbReference>
<dbReference type="InterPro" id="IPR025747">
    <property type="entry name" value="ThiC-associated_dom"/>
</dbReference>
<dbReference type="InterPro" id="IPR038521">
    <property type="entry name" value="ThiC/Bza_core_dom"/>
</dbReference>
<dbReference type="InterPro" id="IPR002817">
    <property type="entry name" value="ThiC/BzaA/B"/>
</dbReference>
<dbReference type="NCBIfam" id="NF006763">
    <property type="entry name" value="PRK09284.1"/>
    <property type="match status" value="1"/>
</dbReference>
<dbReference type="NCBIfam" id="NF009895">
    <property type="entry name" value="PRK13352.1"/>
    <property type="match status" value="1"/>
</dbReference>
<dbReference type="NCBIfam" id="TIGR00190">
    <property type="entry name" value="thiC"/>
    <property type="match status" value="1"/>
</dbReference>
<dbReference type="PANTHER" id="PTHR30557:SF1">
    <property type="entry name" value="PHOSPHOMETHYLPYRIMIDINE SYNTHASE, CHLOROPLASTIC"/>
    <property type="match status" value="1"/>
</dbReference>
<dbReference type="PANTHER" id="PTHR30557">
    <property type="entry name" value="THIAMINE BIOSYNTHESIS PROTEIN THIC"/>
    <property type="match status" value="1"/>
</dbReference>
<dbReference type="Pfam" id="PF13667">
    <property type="entry name" value="ThiC-associated"/>
    <property type="match status" value="1"/>
</dbReference>
<dbReference type="Pfam" id="PF01964">
    <property type="entry name" value="ThiC_Rad_SAM"/>
    <property type="match status" value="1"/>
</dbReference>
<dbReference type="SFLD" id="SFLDF00407">
    <property type="entry name" value="phosphomethylpyrimidine_syntha"/>
    <property type="match status" value="1"/>
</dbReference>
<dbReference type="SFLD" id="SFLDG01114">
    <property type="entry name" value="phosphomethylpyrimidine_syntha"/>
    <property type="match status" value="1"/>
</dbReference>
<dbReference type="SFLD" id="SFLDS00113">
    <property type="entry name" value="Radical_SAM_Phosphomethylpyrim"/>
    <property type="match status" value="1"/>
</dbReference>
<reference key="1">
    <citation type="journal article" date="2005" name="Nucleic Acids Res.">
        <title>Genomic blueprint of Hahella chejuensis, a marine microbe producing an algicidal agent.</title>
        <authorList>
            <person name="Jeong H."/>
            <person name="Yim J.H."/>
            <person name="Lee C."/>
            <person name="Choi S.-H."/>
            <person name="Park Y.K."/>
            <person name="Yoon S.H."/>
            <person name="Hur C.-G."/>
            <person name="Kang H.-Y."/>
            <person name="Kim D."/>
            <person name="Lee H.H."/>
            <person name="Park K.H."/>
            <person name="Park S.-H."/>
            <person name="Park H.-S."/>
            <person name="Lee H.K."/>
            <person name="Oh T.K."/>
            <person name="Kim J.F."/>
        </authorList>
    </citation>
    <scope>NUCLEOTIDE SEQUENCE [LARGE SCALE GENOMIC DNA]</scope>
    <source>
        <strain>KCTC 2396</strain>
    </source>
</reference>